<accession>P46242</accession>
<gene>
    <name evidence="3" type="primary">psbA1</name>
    <name type="synonym">psbA-1</name>
    <name type="synonym">psbAI</name>
    <name type="ordered locus">alr4866</name>
</gene>
<comment type="function">
    <text evidence="1">Photosystem II (PSII) is a light-driven water:plastoquinone oxidoreductase that uses light energy to abstract electrons from H(2)O, generating O(2) and a proton gradient subsequently used for ATP formation. It consists of a core antenna complex that captures photons, and an electron transfer chain that converts photonic excitation into a charge separation. The D1/D2 (PsbA/PsbD) reaction center heterodimer binds P680, the primary electron donor of PSII as well as several subsequent electron acceptors.</text>
</comment>
<comment type="catalytic activity">
    <reaction evidence="1">
        <text>2 a plastoquinone + 4 hnu + 2 H2O = 2 a plastoquinol + O2</text>
        <dbReference type="Rhea" id="RHEA:36359"/>
        <dbReference type="Rhea" id="RHEA-COMP:9561"/>
        <dbReference type="Rhea" id="RHEA-COMP:9562"/>
        <dbReference type="ChEBI" id="CHEBI:15377"/>
        <dbReference type="ChEBI" id="CHEBI:15379"/>
        <dbReference type="ChEBI" id="CHEBI:17757"/>
        <dbReference type="ChEBI" id="CHEBI:30212"/>
        <dbReference type="ChEBI" id="CHEBI:62192"/>
        <dbReference type="EC" id="1.10.3.9"/>
    </reaction>
</comment>
<comment type="cofactor">
    <text evidence="1">The D1/D2 heterodimer binds P680, chlorophylls that are the primary electron donor of PSII, and subsequent electron acceptors. It shares a non-heme iron and each subunit binds pheophytin, quinone, additional chlorophylls, carotenoids and lipids. D1 provides most of the ligands for the Mn4-Ca-O5 cluster of the oxygen-evolving complex (OEC). There is also a Cl(-1) ion associated with D1 and D2, which is required for oxygen evolution. The PSII complex binds additional chlorophylls, carotenoids and specific lipids.</text>
</comment>
<comment type="subunit">
    <text evidence="1">PSII is composed of 1 copy each of membrane proteins PsbA, PsbB, PsbC, PsbD, PsbE, PsbF, PsbH, PsbI, PsbJ, PsbK, PsbL, PsbM, PsbT, PsbX, PsbY, PsbZ, Psb30/Ycf12, peripheral proteins PsbO, CyanoQ (PsbQ), PsbU, PsbV and a large number of cofactors. It forms dimeric complexes.</text>
</comment>
<comment type="subcellular location">
    <subcellularLocation>
        <location evidence="1">Cellular thylakoid membrane</location>
        <topology evidence="1">Multi-pass membrane protein</topology>
    </subcellularLocation>
</comment>
<comment type="PTM">
    <text evidence="1">Tyr-161 forms a radical intermediate that is referred to as redox-active TyrZ, YZ or Y-Z.</text>
</comment>
<comment type="PTM">
    <text evidence="1">C-terminally processed by CtpA; processing is essential to allow assembly of the oxygen-evolving complex and thus photosynthetic growth.</text>
</comment>
<comment type="miscellaneous">
    <text evidence="1">Cyanobacteria usually contain more than 2 copies of the psbA gene.</text>
</comment>
<comment type="miscellaneous">
    <text evidence="1">2 of the reaction center chlorophylls (ChlD1 and ChlD2) are entirely coordinated by water.</text>
</comment>
<comment type="miscellaneous">
    <text evidence="1">Herbicides such as atrazine, BNT, diuron or ioxynil bind in the Q(B) binding site and block subsequent electron transfer.</text>
</comment>
<comment type="similarity">
    <text evidence="1">Belongs to the reaction center PufL/M/PsbA/D family.</text>
</comment>
<proteinExistence type="inferred from homology"/>
<evidence type="ECO:0000255" key="1">
    <source>
        <dbReference type="HAMAP-Rule" id="MF_01379"/>
    </source>
</evidence>
<evidence type="ECO:0000303" key="2">
    <source ref="1"/>
</evidence>
<evidence type="ECO:0000305" key="3"/>
<reference key="1">
    <citation type="journal article" date="1984" name="Plant Mol. Biol.">
        <title>Isolation, sequence and expression of two members of the 32 kd thylakoid membrane protein gene family from the cyanobacterium Anabaena 7120.</title>
        <authorList>
            <person name="Curtis S.E."/>
            <person name="Haselkorn R."/>
        </authorList>
        <dbReference type="AGRICOLA" id="IND84114040"/>
    </citation>
    <scope>NUCLEOTIDE SEQUENCE [GENOMIC DNA]</scope>
</reference>
<reference key="2">
    <citation type="journal article" date="2001" name="DNA Res.">
        <title>Complete genomic sequence of the filamentous nitrogen-fixing cyanobacterium Anabaena sp. strain PCC 7120.</title>
        <authorList>
            <person name="Kaneko T."/>
            <person name="Nakamura Y."/>
            <person name="Wolk C.P."/>
            <person name="Kuritz T."/>
            <person name="Sasamoto S."/>
            <person name="Watanabe A."/>
            <person name="Iriguchi M."/>
            <person name="Ishikawa A."/>
            <person name="Kawashima K."/>
            <person name="Kimura T."/>
            <person name="Kishida Y."/>
            <person name="Kohara M."/>
            <person name="Matsumoto M."/>
            <person name="Matsuno A."/>
            <person name="Muraki A."/>
            <person name="Nakazaki N."/>
            <person name="Shimpo S."/>
            <person name="Sugimoto M."/>
            <person name="Takazawa M."/>
            <person name="Yamada M."/>
            <person name="Yasuda M."/>
            <person name="Tabata S."/>
        </authorList>
    </citation>
    <scope>NUCLEOTIDE SEQUENCE [LARGE SCALE GENOMIC DNA]</scope>
    <source>
        <strain>PCC 7120 / SAG 25.82 / UTEX 2576</strain>
    </source>
</reference>
<protein>
    <recommendedName>
        <fullName evidence="1">Photosystem II protein D1 1</fullName>
        <shortName evidence="1">PSII D1 protein 1</shortName>
        <ecNumber evidence="1">1.10.3.9</ecNumber>
    </recommendedName>
    <alternativeName>
        <fullName evidence="2">32 kDa thylakoid membrane protein 1</fullName>
    </alternativeName>
    <alternativeName>
        <fullName evidence="1">Photosystem II Q(B) protein 1</fullName>
    </alternativeName>
</protein>
<dbReference type="EC" id="1.10.3.9" evidence="1"/>
<dbReference type="EMBL" id="U21331">
    <property type="protein sequence ID" value="AAB59998.1"/>
    <property type="molecule type" value="Genomic_DNA"/>
</dbReference>
<dbReference type="EMBL" id="BA000019">
    <property type="protein sequence ID" value="BAB76565.1"/>
    <property type="molecule type" value="Genomic_DNA"/>
</dbReference>
<dbReference type="PIR" id="AB2414">
    <property type="entry name" value="AB2414"/>
</dbReference>
<dbReference type="SMR" id="P46242"/>
<dbReference type="STRING" id="103690.gene:10496920"/>
<dbReference type="KEGG" id="ana:alr4866"/>
<dbReference type="eggNOG" id="ENOG502Z87P">
    <property type="taxonomic scope" value="Bacteria"/>
</dbReference>
<dbReference type="OrthoDB" id="505356at2"/>
<dbReference type="Proteomes" id="UP000002483">
    <property type="component" value="Chromosome"/>
</dbReference>
<dbReference type="GO" id="GO:0009523">
    <property type="term" value="C:photosystem II"/>
    <property type="evidence" value="ECO:0007669"/>
    <property type="project" value="UniProtKB-KW"/>
</dbReference>
<dbReference type="GO" id="GO:0031676">
    <property type="term" value="C:plasma membrane-derived thylakoid membrane"/>
    <property type="evidence" value="ECO:0007669"/>
    <property type="project" value="UniProtKB-SubCell"/>
</dbReference>
<dbReference type="GO" id="GO:0016168">
    <property type="term" value="F:chlorophyll binding"/>
    <property type="evidence" value="ECO:0007669"/>
    <property type="project" value="UniProtKB-UniRule"/>
</dbReference>
<dbReference type="GO" id="GO:0045156">
    <property type="term" value="F:electron transporter, transferring electrons within the cyclic electron transport pathway of photosynthesis activity"/>
    <property type="evidence" value="ECO:0007669"/>
    <property type="project" value="InterPro"/>
</dbReference>
<dbReference type="GO" id="GO:0005506">
    <property type="term" value="F:iron ion binding"/>
    <property type="evidence" value="ECO:0007669"/>
    <property type="project" value="UniProtKB-UniRule"/>
</dbReference>
<dbReference type="GO" id="GO:0016682">
    <property type="term" value="F:oxidoreductase activity, acting on diphenols and related substances as donors, oxygen as acceptor"/>
    <property type="evidence" value="ECO:0007669"/>
    <property type="project" value="UniProtKB-UniRule"/>
</dbReference>
<dbReference type="GO" id="GO:0010242">
    <property type="term" value="F:oxygen evolving activity"/>
    <property type="evidence" value="ECO:0007669"/>
    <property type="project" value="UniProtKB-EC"/>
</dbReference>
<dbReference type="GO" id="GO:0009772">
    <property type="term" value="P:photosynthetic electron transport in photosystem II"/>
    <property type="evidence" value="ECO:0007669"/>
    <property type="project" value="InterPro"/>
</dbReference>
<dbReference type="GO" id="GO:0009635">
    <property type="term" value="P:response to herbicide"/>
    <property type="evidence" value="ECO:0007669"/>
    <property type="project" value="UniProtKB-KW"/>
</dbReference>
<dbReference type="CDD" id="cd09289">
    <property type="entry name" value="Photosystem-II_D1"/>
    <property type="match status" value="1"/>
</dbReference>
<dbReference type="FunFam" id="1.20.85.10:FF:000002">
    <property type="entry name" value="Photosystem II protein D1"/>
    <property type="match status" value="1"/>
</dbReference>
<dbReference type="Gene3D" id="1.20.85.10">
    <property type="entry name" value="Photosystem II protein D1-like"/>
    <property type="match status" value="2"/>
</dbReference>
<dbReference type="HAMAP" id="MF_01379">
    <property type="entry name" value="PSII_PsbA_D1"/>
    <property type="match status" value="1"/>
</dbReference>
<dbReference type="InterPro" id="IPR055266">
    <property type="entry name" value="D1/D2"/>
</dbReference>
<dbReference type="InterPro" id="IPR036854">
    <property type="entry name" value="Photo_II_D1/D2_sf"/>
</dbReference>
<dbReference type="InterPro" id="IPR000484">
    <property type="entry name" value="Photo_RC_L/M"/>
</dbReference>
<dbReference type="InterPro" id="IPR055265">
    <property type="entry name" value="Photo_RC_L/M_CS"/>
</dbReference>
<dbReference type="InterPro" id="IPR005867">
    <property type="entry name" value="PSII_D1"/>
</dbReference>
<dbReference type="NCBIfam" id="TIGR01151">
    <property type="entry name" value="psbA"/>
    <property type="match status" value="1"/>
</dbReference>
<dbReference type="PANTHER" id="PTHR33149:SF12">
    <property type="entry name" value="PHOTOSYSTEM II D2 PROTEIN"/>
    <property type="match status" value="1"/>
</dbReference>
<dbReference type="PANTHER" id="PTHR33149">
    <property type="entry name" value="PHOTOSYSTEM II PROTEIN D1"/>
    <property type="match status" value="1"/>
</dbReference>
<dbReference type="Pfam" id="PF00124">
    <property type="entry name" value="Photo_RC"/>
    <property type="match status" value="1"/>
</dbReference>
<dbReference type="PRINTS" id="PR00256">
    <property type="entry name" value="REACTNCENTRE"/>
</dbReference>
<dbReference type="SUPFAM" id="SSF81483">
    <property type="entry name" value="Bacterial photosystem II reaction centre, L and M subunits"/>
    <property type="match status" value="1"/>
</dbReference>
<dbReference type="PROSITE" id="PS00244">
    <property type="entry name" value="REACTION_CENTER"/>
    <property type="match status" value="1"/>
</dbReference>
<name>PSBA1_NOSS1</name>
<sequence length="360" mass="39674">MTTTLQQRSSANVWERFCTWITSTENRIYVGWFGVLMIPTLLAATVCFIIAFVAAPPVDIDGIREPVAGSLIYGNNIISGAVVPSSNAIGLHFYPIWEAASLDEWLYNGGPYQLVIFHFLIGCACYLGRQWELSYRLGMRPWICVAYSAPLASATAVFLIYPIGQGSFSDGMPLGISGTFNFMIVFQAEHNILMHPFHMLGVAGVFGGSLFSAMHGSLVTSSLVRETTEIESQNYGYKFGQEEETYNIVAAHGYFGRLIFQYASFNNSRQLHFFLAAWPVIGIWFTALGVSTMAFNLNGFNFNQSIIDSQGRVINTWADIINRANLGMEVMHERNAHNFPLDLAAGEVAPVALTAPAING</sequence>
<keyword id="KW-0106">Calcium</keyword>
<keyword id="KW-0148">Chlorophyll</keyword>
<keyword id="KW-0157">Chromophore</keyword>
<keyword id="KW-0249">Electron transport</keyword>
<keyword id="KW-0359">Herbicide resistance</keyword>
<keyword id="KW-0408">Iron</keyword>
<keyword id="KW-0460">Magnesium</keyword>
<keyword id="KW-0464">Manganese</keyword>
<keyword id="KW-0472">Membrane</keyword>
<keyword id="KW-0479">Metal-binding</keyword>
<keyword id="KW-0560">Oxidoreductase</keyword>
<keyword id="KW-0602">Photosynthesis</keyword>
<keyword id="KW-0604">Photosystem II</keyword>
<keyword id="KW-1185">Reference proteome</keyword>
<keyword id="KW-0793">Thylakoid</keyword>
<keyword id="KW-0812">Transmembrane</keyword>
<keyword id="KW-1133">Transmembrane helix</keyword>
<keyword id="KW-0813">Transport</keyword>
<feature type="chain" id="PRO_0000090478" description="Photosystem II protein D1 1">
    <location>
        <begin position="1"/>
        <end position="344"/>
    </location>
</feature>
<feature type="propeptide" id="PRO_0000316336" evidence="1">
    <location>
        <begin position="345"/>
        <end position="360"/>
    </location>
</feature>
<feature type="transmembrane region" description="Helical" evidence="1">
    <location>
        <begin position="29"/>
        <end position="46"/>
    </location>
</feature>
<feature type="transmembrane region" description="Helical" evidence="1">
    <location>
        <begin position="118"/>
        <end position="133"/>
    </location>
</feature>
<feature type="transmembrane region" description="Helical" evidence="1">
    <location>
        <begin position="142"/>
        <end position="156"/>
    </location>
</feature>
<feature type="transmembrane region" description="Helical" evidence="1">
    <location>
        <begin position="197"/>
        <end position="218"/>
    </location>
</feature>
<feature type="transmembrane region" description="Helical" evidence="1">
    <location>
        <begin position="274"/>
        <end position="288"/>
    </location>
</feature>
<feature type="binding site" description="axial binding residue" evidence="1">
    <location>
        <position position="118"/>
    </location>
    <ligand>
        <name>chlorophyll a</name>
        <dbReference type="ChEBI" id="CHEBI:58416"/>
        <label>ChlzD1</label>
    </ligand>
    <ligandPart>
        <name>Mg</name>
        <dbReference type="ChEBI" id="CHEBI:25107"/>
    </ligandPart>
</feature>
<feature type="binding site" evidence="1">
    <location>
        <position position="126"/>
    </location>
    <ligand>
        <name>pheophytin a</name>
        <dbReference type="ChEBI" id="CHEBI:136840"/>
        <label>D1</label>
    </ligand>
</feature>
<feature type="binding site" evidence="1">
    <location>
        <position position="170"/>
    </location>
    <ligand>
        <name>[CaMn4O5] cluster</name>
        <dbReference type="ChEBI" id="CHEBI:189552"/>
    </ligand>
</feature>
<feature type="binding site" evidence="1">
    <location>
        <position position="189"/>
    </location>
    <ligand>
        <name>[CaMn4O5] cluster</name>
        <dbReference type="ChEBI" id="CHEBI:189552"/>
    </ligand>
</feature>
<feature type="binding site" description="axial binding residue" evidence="1">
    <location>
        <position position="198"/>
    </location>
    <ligand>
        <name>chlorophyll a</name>
        <dbReference type="ChEBI" id="CHEBI:58416"/>
        <label>PD1</label>
    </ligand>
    <ligandPart>
        <name>Mg</name>
        <dbReference type="ChEBI" id="CHEBI:25107"/>
    </ligandPart>
</feature>
<feature type="binding site" evidence="1">
    <location>
        <position position="215"/>
    </location>
    <ligand>
        <name>a quinone</name>
        <dbReference type="ChEBI" id="CHEBI:132124"/>
        <label>B</label>
    </ligand>
</feature>
<feature type="binding site" evidence="1">
    <location>
        <position position="215"/>
    </location>
    <ligand>
        <name>Fe cation</name>
        <dbReference type="ChEBI" id="CHEBI:24875"/>
        <note>ligand shared with heterodimeric partner</note>
    </ligand>
</feature>
<feature type="binding site" evidence="1">
    <location>
        <begin position="264"/>
        <end position="265"/>
    </location>
    <ligand>
        <name>a quinone</name>
        <dbReference type="ChEBI" id="CHEBI:132124"/>
        <label>B</label>
    </ligand>
</feature>
<feature type="binding site" evidence="1">
    <location>
        <position position="272"/>
    </location>
    <ligand>
        <name>Fe cation</name>
        <dbReference type="ChEBI" id="CHEBI:24875"/>
        <note>ligand shared with heterodimeric partner</note>
    </ligand>
</feature>
<feature type="binding site" evidence="1">
    <location>
        <position position="332"/>
    </location>
    <ligand>
        <name>[CaMn4O5] cluster</name>
        <dbReference type="ChEBI" id="CHEBI:189552"/>
    </ligand>
</feature>
<feature type="binding site" evidence="1">
    <location>
        <position position="333"/>
    </location>
    <ligand>
        <name>[CaMn4O5] cluster</name>
        <dbReference type="ChEBI" id="CHEBI:189552"/>
    </ligand>
</feature>
<feature type="binding site" evidence="1">
    <location>
        <position position="342"/>
    </location>
    <ligand>
        <name>[CaMn4O5] cluster</name>
        <dbReference type="ChEBI" id="CHEBI:189552"/>
    </ligand>
</feature>
<feature type="binding site" evidence="1">
    <location>
        <position position="344"/>
    </location>
    <ligand>
        <name>[CaMn4O5] cluster</name>
        <dbReference type="ChEBI" id="CHEBI:189552"/>
    </ligand>
</feature>
<feature type="site" description="Tyrosine radical intermediate" evidence="1">
    <location>
        <position position="161"/>
    </location>
</feature>
<feature type="site" description="Stabilizes free radical intermediate" evidence="1">
    <location>
        <position position="190"/>
    </location>
</feature>
<feature type="site" description="Cleavage; by CtpA" evidence="1">
    <location>
        <begin position="344"/>
        <end position="345"/>
    </location>
</feature>
<organism>
    <name type="scientific">Nostoc sp. (strain PCC 7120 / SAG 25.82 / UTEX 2576)</name>
    <dbReference type="NCBI Taxonomy" id="103690"/>
    <lineage>
        <taxon>Bacteria</taxon>
        <taxon>Bacillati</taxon>
        <taxon>Cyanobacteriota</taxon>
        <taxon>Cyanophyceae</taxon>
        <taxon>Nostocales</taxon>
        <taxon>Nostocaceae</taxon>
        <taxon>Nostoc</taxon>
    </lineage>
</organism>